<sequence>MKRTYQPKKRKHAKTHGFRSRMATKNGRKVLKLRRLKGRYQLTVSDK</sequence>
<protein>
    <recommendedName>
        <fullName evidence="1">Large ribosomal subunit protein bL34</fullName>
    </recommendedName>
    <alternativeName>
        <fullName evidence="3">50S ribosomal protein L34</fullName>
    </alternativeName>
</protein>
<keyword id="KW-1185">Reference proteome</keyword>
<keyword id="KW-0687">Ribonucleoprotein</keyword>
<keyword id="KW-0689">Ribosomal protein</keyword>
<proteinExistence type="inferred from homology"/>
<reference key="1">
    <citation type="journal article" date="2004" name="Genome Res.">
        <title>The complete genome and proteome of Mycoplasma mobile.</title>
        <authorList>
            <person name="Jaffe J.D."/>
            <person name="Stange-Thomann N."/>
            <person name="Smith C."/>
            <person name="DeCaprio D."/>
            <person name="Fisher S."/>
            <person name="Butler J."/>
            <person name="Calvo S."/>
            <person name="Elkins T."/>
            <person name="FitzGerald M.G."/>
            <person name="Hafez N."/>
            <person name="Kodira C.D."/>
            <person name="Major J."/>
            <person name="Wang S."/>
            <person name="Wilkinson J."/>
            <person name="Nicol R."/>
            <person name="Nusbaum C."/>
            <person name="Birren B."/>
            <person name="Berg H.C."/>
            <person name="Church G.M."/>
        </authorList>
    </citation>
    <scope>NUCLEOTIDE SEQUENCE [LARGE SCALE GENOMIC DNA]</scope>
    <source>
        <strain>ATCC 43663 / NCTC 11711 / 163 K</strain>
    </source>
</reference>
<gene>
    <name evidence="1" type="primary">rpmH</name>
    <name type="ordered locus">MMOB6320</name>
</gene>
<feature type="chain" id="PRO_0000187417" description="Large ribosomal subunit protein bL34">
    <location>
        <begin position="1"/>
        <end position="47"/>
    </location>
</feature>
<feature type="region of interest" description="Disordered" evidence="2">
    <location>
        <begin position="1"/>
        <end position="26"/>
    </location>
</feature>
<feature type="compositionally biased region" description="Basic residues" evidence="2">
    <location>
        <begin position="1"/>
        <end position="19"/>
    </location>
</feature>
<accession>Q6KH13</accession>
<name>RL34_MYCM1</name>
<dbReference type="EMBL" id="AE017308">
    <property type="protein sequence ID" value="AAT28118.1"/>
    <property type="molecule type" value="Genomic_DNA"/>
</dbReference>
<dbReference type="RefSeq" id="WP_011265152.1">
    <property type="nucleotide sequence ID" value="NC_006908.1"/>
</dbReference>
<dbReference type="SMR" id="Q6KH13"/>
<dbReference type="STRING" id="267748.MMOB6320"/>
<dbReference type="KEGG" id="mmo:MMOB6320"/>
<dbReference type="eggNOG" id="COG0230">
    <property type="taxonomic scope" value="Bacteria"/>
</dbReference>
<dbReference type="HOGENOM" id="CLU_129938_2_0_14"/>
<dbReference type="Proteomes" id="UP000009072">
    <property type="component" value="Chromosome"/>
</dbReference>
<dbReference type="GO" id="GO:1990904">
    <property type="term" value="C:ribonucleoprotein complex"/>
    <property type="evidence" value="ECO:0007669"/>
    <property type="project" value="UniProtKB-KW"/>
</dbReference>
<dbReference type="GO" id="GO:0005840">
    <property type="term" value="C:ribosome"/>
    <property type="evidence" value="ECO:0007669"/>
    <property type="project" value="UniProtKB-KW"/>
</dbReference>
<dbReference type="GO" id="GO:0003735">
    <property type="term" value="F:structural constituent of ribosome"/>
    <property type="evidence" value="ECO:0007669"/>
    <property type="project" value="InterPro"/>
</dbReference>
<dbReference type="GO" id="GO:0006412">
    <property type="term" value="P:translation"/>
    <property type="evidence" value="ECO:0007669"/>
    <property type="project" value="UniProtKB-UniRule"/>
</dbReference>
<dbReference type="FunFam" id="1.10.287.3980:FF:000001">
    <property type="entry name" value="Mitochondrial ribosomal protein L34"/>
    <property type="match status" value="1"/>
</dbReference>
<dbReference type="Gene3D" id="1.10.287.3980">
    <property type="match status" value="1"/>
</dbReference>
<dbReference type="HAMAP" id="MF_00391">
    <property type="entry name" value="Ribosomal_bL34"/>
    <property type="match status" value="1"/>
</dbReference>
<dbReference type="InterPro" id="IPR000271">
    <property type="entry name" value="Ribosomal_bL34"/>
</dbReference>
<dbReference type="InterPro" id="IPR020939">
    <property type="entry name" value="Ribosomal_bL34_CS"/>
</dbReference>
<dbReference type="NCBIfam" id="TIGR01030">
    <property type="entry name" value="rpmH_bact"/>
    <property type="match status" value="1"/>
</dbReference>
<dbReference type="PANTHER" id="PTHR14503:SF4">
    <property type="entry name" value="LARGE RIBOSOMAL SUBUNIT PROTEIN BL34M"/>
    <property type="match status" value="1"/>
</dbReference>
<dbReference type="PANTHER" id="PTHR14503">
    <property type="entry name" value="MITOCHONDRIAL RIBOSOMAL PROTEIN 34 FAMILY MEMBER"/>
    <property type="match status" value="1"/>
</dbReference>
<dbReference type="Pfam" id="PF00468">
    <property type="entry name" value="Ribosomal_L34"/>
    <property type="match status" value="1"/>
</dbReference>
<dbReference type="PROSITE" id="PS00784">
    <property type="entry name" value="RIBOSOMAL_L34"/>
    <property type="match status" value="1"/>
</dbReference>
<organism>
    <name type="scientific">Mycoplasma mobile (strain ATCC 43663 / 163K / NCTC 11711)</name>
    <name type="common">Mesomycoplasma mobile</name>
    <dbReference type="NCBI Taxonomy" id="267748"/>
    <lineage>
        <taxon>Bacteria</taxon>
        <taxon>Bacillati</taxon>
        <taxon>Mycoplasmatota</taxon>
        <taxon>Mycoplasmoidales</taxon>
        <taxon>Metamycoplasmataceae</taxon>
        <taxon>Mesomycoplasma</taxon>
    </lineage>
</organism>
<evidence type="ECO:0000255" key="1">
    <source>
        <dbReference type="HAMAP-Rule" id="MF_00391"/>
    </source>
</evidence>
<evidence type="ECO:0000256" key="2">
    <source>
        <dbReference type="SAM" id="MobiDB-lite"/>
    </source>
</evidence>
<evidence type="ECO:0000305" key="3"/>
<comment type="similarity">
    <text evidence="1">Belongs to the bacterial ribosomal protein bL34 family.</text>
</comment>